<comment type="function">
    <text evidence="1">Required for the formation of a threonylcarbamoyl group on adenosine at position 37 (t(6)A37) in tRNAs that read codons beginning with adenine. Is involved in the transfer of the threonylcarbamoyl moiety of threonylcarbamoyl-AMP (TC-AMP) to the N6 group of A37, together with TsaE and TsaB. TsaD likely plays a direct catalytic role in this reaction.</text>
</comment>
<comment type="catalytic activity">
    <reaction evidence="1">
        <text>L-threonylcarbamoyladenylate + adenosine(37) in tRNA = N(6)-L-threonylcarbamoyladenosine(37) in tRNA + AMP + H(+)</text>
        <dbReference type="Rhea" id="RHEA:37059"/>
        <dbReference type="Rhea" id="RHEA-COMP:10162"/>
        <dbReference type="Rhea" id="RHEA-COMP:10163"/>
        <dbReference type="ChEBI" id="CHEBI:15378"/>
        <dbReference type="ChEBI" id="CHEBI:73682"/>
        <dbReference type="ChEBI" id="CHEBI:74411"/>
        <dbReference type="ChEBI" id="CHEBI:74418"/>
        <dbReference type="ChEBI" id="CHEBI:456215"/>
        <dbReference type="EC" id="2.3.1.234"/>
    </reaction>
</comment>
<comment type="cofactor">
    <cofactor evidence="1">
        <name>Fe(2+)</name>
        <dbReference type="ChEBI" id="CHEBI:29033"/>
    </cofactor>
    <text evidence="1">Binds 1 Fe(2+) ion per subunit.</text>
</comment>
<comment type="subcellular location">
    <subcellularLocation>
        <location evidence="1">Cytoplasm</location>
    </subcellularLocation>
</comment>
<comment type="similarity">
    <text evidence="1">Belongs to the KAE1 / TsaD family.</text>
</comment>
<name>TSAD_PSEAE</name>
<feature type="chain" id="PRO_0000303490" description="tRNA N6-adenosine threonylcarbamoyltransferase">
    <location>
        <begin position="1"/>
        <end position="341"/>
    </location>
</feature>
<feature type="binding site" evidence="1">
    <location>
        <position position="111"/>
    </location>
    <ligand>
        <name>Fe cation</name>
        <dbReference type="ChEBI" id="CHEBI:24875"/>
    </ligand>
</feature>
<feature type="binding site" evidence="1">
    <location>
        <position position="115"/>
    </location>
    <ligand>
        <name>Fe cation</name>
        <dbReference type="ChEBI" id="CHEBI:24875"/>
    </ligand>
</feature>
<feature type="binding site" evidence="1">
    <location>
        <begin position="134"/>
        <end position="138"/>
    </location>
    <ligand>
        <name>substrate</name>
    </ligand>
</feature>
<feature type="binding site" evidence="1">
    <location>
        <position position="167"/>
    </location>
    <ligand>
        <name>substrate</name>
    </ligand>
</feature>
<feature type="binding site" evidence="1">
    <location>
        <position position="180"/>
    </location>
    <ligand>
        <name>substrate</name>
    </ligand>
</feature>
<feature type="binding site" evidence="1">
    <location>
        <position position="276"/>
    </location>
    <ligand>
        <name>substrate</name>
    </ligand>
</feature>
<feature type="binding site" evidence="1">
    <location>
        <position position="304"/>
    </location>
    <ligand>
        <name>Fe cation</name>
        <dbReference type="ChEBI" id="CHEBI:24875"/>
    </ligand>
</feature>
<organism>
    <name type="scientific">Pseudomonas aeruginosa (strain ATCC 15692 / DSM 22644 / CIP 104116 / JCM 14847 / LMG 12228 / 1C / PRS 101 / PAO1)</name>
    <dbReference type="NCBI Taxonomy" id="208964"/>
    <lineage>
        <taxon>Bacteria</taxon>
        <taxon>Pseudomonadati</taxon>
        <taxon>Pseudomonadota</taxon>
        <taxon>Gammaproteobacteria</taxon>
        <taxon>Pseudomonadales</taxon>
        <taxon>Pseudomonadaceae</taxon>
        <taxon>Pseudomonas</taxon>
    </lineage>
</organism>
<protein>
    <recommendedName>
        <fullName evidence="1">tRNA N6-adenosine threonylcarbamoyltransferase</fullName>
        <ecNumber evidence="1">2.3.1.234</ecNumber>
    </recommendedName>
    <alternativeName>
        <fullName evidence="1">N6-L-threonylcarbamoyladenine synthase</fullName>
        <shortName evidence="1">t(6)A synthase</shortName>
    </alternativeName>
    <alternativeName>
        <fullName evidence="1">t(6)A37 threonylcarbamoyladenosine biosynthesis protein TsaD</fullName>
    </alternativeName>
    <alternativeName>
        <fullName evidence="1">tRNA threonylcarbamoyladenosine biosynthesis protein TsaD</fullName>
    </alternativeName>
</protein>
<evidence type="ECO:0000255" key="1">
    <source>
        <dbReference type="HAMAP-Rule" id="MF_01445"/>
    </source>
</evidence>
<accession>Q9I5V7</accession>
<keyword id="KW-0012">Acyltransferase</keyword>
<keyword id="KW-0963">Cytoplasm</keyword>
<keyword id="KW-0408">Iron</keyword>
<keyword id="KW-0479">Metal-binding</keyword>
<keyword id="KW-1185">Reference proteome</keyword>
<keyword id="KW-0808">Transferase</keyword>
<keyword id="KW-0819">tRNA processing</keyword>
<dbReference type="EC" id="2.3.1.234" evidence="1"/>
<dbReference type="EMBL" id="AE004091">
    <property type="protein sequence ID" value="AAG03969.1"/>
    <property type="molecule type" value="Genomic_DNA"/>
</dbReference>
<dbReference type="PIR" id="H83572">
    <property type="entry name" value="H83572"/>
</dbReference>
<dbReference type="RefSeq" id="NP_249271.1">
    <property type="nucleotide sequence ID" value="NC_002516.2"/>
</dbReference>
<dbReference type="RefSeq" id="WP_003109020.1">
    <property type="nucleotide sequence ID" value="NZ_QZGE01000010.1"/>
</dbReference>
<dbReference type="SMR" id="Q9I5V7"/>
<dbReference type="FunCoup" id="Q9I5V7">
    <property type="interactions" value="676"/>
</dbReference>
<dbReference type="STRING" id="208964.PA0580"/>
<dbReference type="PaxDb" id="208964-PA0580"/>
<dbReference type="DNASU" id="882271"/>
<dbReference type="GeneID" id="882271"/>
<dbReference type="KEGG" id="pae:PA0580"/>
<dbReference type="PATRIC" id="fig|208964.12.peg.615"/>
<dbReference type="PseudoCAP" id="PA0580"/>
<dbReference type="HOGENOM" id="CLU_023208_0_2_6"/>
<dbReference type="InParanoid" id="Q9I5V7"/>
<dbReference type="OrthoDB" id="9806197at2"/>
<dbReference type="PhylomeDB" id="Q9I5V7"/>
<dbReference type="BioCyc" id="PAER208964:G1FZ6-587-MONOMER"/>
<dbReference type="Proteomes" id="UP000002438">
    <property type="component" value="Chromosome"/>
</dbReference>
<dbReference type="GO" id="GO:0005737">
    <property type="term" value="C:cytoplasm"/>
    <property type="evidence" value="ECO:0007669"/>
    <property type="project" value="UniProtKB-SubCell"/>
</dbReference>
<dbReference type="GO" id="GO:0005506">
    <property type="term" value="F:iron ion binding"/>
    <property type="evidence" value="ECO:0007669"/>
    <property type="project" value="UniProtKB-UniRule"/>
</dbReference>
<dbReference type="GO" id="GO:0061711">
    <property type="term" value="F:N(6)-L-threonylcarbamoyladenine synthase activity"/>
    <property type="evidence" value="ECO:0007669"/>
    <property type="project" value="UniProtKB-EC"/>
</dbReference>
<dbReference type="GO" id="GO:0002949">
    <property type="term" value="P:tRNA threonylcarbamoyladenosine modification"/>
    <property type="evidence" value="ECO:0007669"/>
    <property type="project" value="UniProtKB-UniRule"/>
</dbReference>
<dbReference type="CDD" id="cd24133">
    <property type="entry name" value="ASKHA_NBD_TsaD_bac"/>
    <property type="match status" value="1"/>
</dbReference>
<dbReference type="FunFam" id="3.30.420.40:FF:000012">
    <property type="entry name" value="tRNA N6-adenosine threonylcarbamoyltransferase"/>
    <property type="match status" value="1"/>
</dbReference>
<dbReference type="FunFam" id="3.30.420.40:FF:000031">
    <property type="entry name" value="tRNA N6-adenosine threonylcarbamoyltransferase"/>
    <property type="match status" value="1"/>
</dbReference>
<dbReference type="Gene3D" id="3.30.420.40">
    <property type="match status" value="2"/>
</dbReference>
<dbReference type="HAMAP" id="MF_01445">
    <property type="entry name" value="TsaD"/>
    <property type="match status" value="1"/>
</dbReference>
<dbReference type="InterPro" id="IPR043129">
    <property type="entry name" value="ATPase_NBD"/>
</dbReference>
<dbReference type="InterPro" id="IPR000905">
    <property type="entry name" value="Gcp-like_dom"/>
</dbReference>
<dbReference type="InterPro" id="IPR017861">
    <property type="entry name" value="KAE1/TsaD"/>
</dbReference>
<dbReference type="InterPro" id="IPR022450">
    <property type="entry name" value="TsaD"/>
</dbReference>
<dbReference type="NCBIfam" id="TIGR00329">
    <property type="entry name" value="gcp_kae1"/>
    <property type="match status" value="1"/>
</dbReference>
<dbReference type="NCBIfam" id="TIGR03723">
    <property type="entry name" value="T6A_TsaD_YgjD"/>
    <property type="match status" value="1"/>
</dbReference>
<dbReference type="PANTHER" id="PTHR11735">
    <property type="entry name" value="TRNA N6-ADENOSINE THREONYLCARBAMOYLTRANSFERASE"/>
    <property type="match status" value="1"/>
</dbReference>
<dbReference type="PANTHER" id="PTHR11735:SF6">
    <property type="entry name" value="TRNA N6-ADENOSINE THREONYLCARBAMOYLTRANSFERASE, MITOCHONDRIAL"/>
    <property type="match status" value="1"/>
</dbReference>
<dbReference type="Pfam" id="PF00814">
    <property type="entry name" value="TsaD"/>
    <property type="match status" value="1"/>
</dbReference>
<dbReference type="PRINTS" id="PR00789">
    <property type="entry name" value="OSIALOPTASE"/>
</dbReference>
<dbReference type="SUPFAM" id="SSF53067">
    <property type="entry name" value="Actin-like ATPase domain"/>
    <property type="match status" value="2"/>
</dbReference>
<proteinExistence type="inferred from homology"/>
<sequence>MRVLGLETSCDETGVALYDSERGLLADALFSQIDLHRVYGGVVPELASRDHVKRMLPLIRQVLDESGCTPADIDAIAYTAGPGLVGALLVGASCAQAMAFAWGVPAVGVHHMEGHLLAPMLEEQPPRFPFVALLVSGGHTQLVRVDGIGRYQLLGESVDDAAGEAFDKTAKLIGLGYPGGPEIARLAERGTPGRFVFPRPMTDRPGLDFSFSGLKTFTLNTWQRCVEAGDDSEQTRCDIALAFQTAVVETLLIKCRRALKQTGLKNLVIAGGVSANQALRSGLEKMLGEMKGQVFYARPRFCTDNGAMIAYAGCQRLLAGQHDGPAISVQPRWPMESLPAV</sequence>
<reference key="1">
    <citation type="journal article" date="2000" name="Nature">
        <title>Complete genome sequence of Pseudomonas aeruginosa PAO1, an opportunistic pathogen.</title>
        <authorList>
            <person name="Stover C.K."/>
            <person name="Pham X.-Q.T."/>
            <person name="Erwin A.L."/>
            <person name="Mizoguchi S.D."/>
            <person name="Warrener P."/>
            <person name="Hickey M.J."/>
            <person name="Brinkman F.S.L."/>
            <person name="Hufnagle W.O."/>
            <person name="Kowalik D.J."/>
            <person name="Lagrou M."/>
            <person name="Garber R.L."/>
            <person name="Goltry L."/>
            <person name="Tolentino E."/>
            <person name="Westbrock-Wadman S."/>
            <person name="Yuan Y."/>
            <person name="Brody L.L."/>
            <person name="Coulter S.N."/>
            <person name="Folger K.R."/>
            <person name="Kas A."/>
            <person name="Larbig K."/>
            <person name="Lim R.M."/>
            <person name="Smith K.A."/>
            <person name="Spencer D.H."/>
            <person name="Wong G.K.-S."/>
            <person name="Wu Z."/>
            <person name="Paulsen I.T."/>
            <person name="Reizer J."/>
            <person name="Saier M.H. Jr."/>
            <person name="Hancock R.E.W."/>
            <person name="Lory S."/>
            <person name="Olson M.V."/>
        </authorList>
    </citation>
    <scope>NUCLEOTIDE SEQUENCE [LARGE SCALE GENOMIC DNA]</scope>
    <source>
        <strain>ATCC 15692 / DSM 22644 / CIP 104116 / JCM 14847 / LMG 12228 / 1C / PRS 101 / PAO1</strain>
    </source>
</reference>
<gene>
    <name evidence="1" type="primary">tsaD</name>
    <name type="synonym">gcp</name>
    <name type="ordered locus">PA0580</name>
</gene>